<sequence length="411" mass="44739">MTTPADDQGKSPENPWPVRAVATRVAKYIDRLGMVWIEGQLTELKIRQTTAWMVLRDPAADMSLSVSCPRDLVANAPVPLSEGTQVIVLGKPQFYTRNGSFSLRISEIRAVGIGELLARIDRLRRLLDAEGLFDPRLKRPIPFLPGTIGLITGRASHAERDVMTVAANRWPAVRFAVRNTIVQGPNAVPQIVGALRELDRDPGVDVIVLARGGGSVEDLLPFSDETLCREIASCTTPVVSAVGHEPDNPLCDLVADLRAATPTDAAKRVVPDAAAEQAFVTDLRRRSARALRQWVHREQHHLDQLRSRPVLARPLQAIDARADEVHRAVAAARRDVRRMVTVESERVGHLSARLTTLGPAATLARGYAVVQTMPDTNVLRTTADAPAGTHLRIRVADGAITAVSEGTDEAH</sequence>
<proteinExistence type="inferred from homology"/>
<reference key="1">
    <citation type="submission" date="2006-12" db="EMBL/GenBank/DDBJ databases">
        <title>Complete sequence of chromosome of Mycobacterium sp. KMS.</title>
        <authorList>
            <consortium name="US DOE Joint Genome Institute"/>
            <person name="Copeland A."/>
            <person name="Lucas S."/>
            <person name="Lapidus A."/>
            <person name="Barry K."/>
            <person name="Detter J.C."/>
            <person name="Glavina del Rio T."/>
            <person name="Hammon N."/>
            <person name="Israni S."/>
            <person name="Dalin E."/>
            <person name="Tice H."/>
            <person name="Pitluck S."/>
            <person name="Kiss H."/>
            <person name="Brettin T."/>
            <person name="Bruce D."/>
            <person name="Han C."/>
            <person name="Tapia R."/>
            <person name="Gilna P."/>
            <person name="Schmutz J."/>
            <person name="Larimer F."/>
            <person name="Land M."/>
            <person name="Hauser L."/>
            <person name="Kyrpides N."/>
            <person name="Mikhailova N."/>
            <person name="Miller C.D."/>
            <person name="Richardson P."/>
        </authorList>
    </citation>
    <scope>NUCLEOTIDE SEQUENCE [LARGE SCALE GENOMIC DNA]</scope>
    <source>
        <strain>KMS</strain>
    </source>
</reference>
<evidence type="ECO:0000255" key="1">
    <source>
        <dbReference type="HAMAP-Rule" id="MF_00378"/>
    </source>
</evidence>
<name>EX7L_MYCSK</name>
<gene>
    <name evidence="1" type="primary">xseA</name>
    <name type="ordered locus">Mkms_4183</name>
</gene>
<organism>
    <name type="scientific">Mycobacterium sp. (strain KMS)</name>
    <dbReference type="NCBI Taxonomy" id="189918"/>
    <lineage>
        <taxon>Bacteria</taxon>
        <taxon>Bacillati</taxon>
        <taxon>Actinomycetota</taxon>
        <taxon>Actinomycetes</taxon>
        <taxon>Mycobacteriales</taxon>
        <taxon>Mycobacteriaceae</taxon>
        <taxon>Mycobacterium</taxon>
    </lineage>
</organism>
<dbReference type="EC" id="3.1.11.6" evidence="1"/>
<dbReference type="EMBL" id="CP000518">
    <property type="protein sequence ID" value="ABL93375.1"/>
    <property type="molecule type" value="Genomic_DNA"/>
</dbReference>
<dbReference type="SMR" id="A1UKL7"/>
<dbReference type="STRING" id="189918.Mkms_4183"/>
<dbReference type="KEGG" id="mkm:Mkms_4183"/>
<dbReference type="HOGENOM" id="CLU_023625_2_1_11"/>
<dbReference type="OrthoDB" id="9802795at2"/>
<dbReference type="GO" id="GO:0005737">
    <property type="term" value="C:cytoplasm"/>
    <property type="evidence" value="ECO:0007669"/>
    <property type="project" value="UniProtKB-SubCell"/>
</dbReference>
<dbReference type="GO" id="GO:0009318">
    <property type="term" value="C:exodeoxyribonuclease VII complex"/>
    <property type="evidence" value="ECO:0007669"/>
    <property type="project" value="InterPro"/>
</dbReference>
<dbReference type="GO" id="GO:0008855">
    <property type="term" value="F:exodeoxyribonuclease VII activity"/>
    <property type="evidence" value="ECO:0007669"/>
    <property type="project" value="UniProtKB-UniRule"/>
</dbReference>
<dbReference type="GO" id="GO:0003676">
    <property type="term" value="F:nucleic acid binding"/>
    <property type="evidence" value="ECO:0007669"/>
    <property type="project" value="InterPro"/>
</dbReference>
<dbReference type="GO" id="GO:0006308">
    <property type="term" value="P:DNA catabolic process"/>
    <property type="evidence" value="ECO:0007669"/>
    <property type="project" value="UniProtKB-UniRule"/>
</dbReference>
<dbReference type="CDD" id="cd04489">
    <property type="entry name" value="ExoVII_LU_OBF"/>
    <property type="match status" value="1"/>
</dbReference>
<dbReference type="HAMAP" id="MF_00378">
    <property type="entry name" value="Exonuc_7_L"/>
    <property type="match status" value="1"/>
</dbReference>
<dbReference type="InterPro" id="IPR003753">
    <property type="entry name" value="Exonuc_VII_L"/>
</dbReference>
<dbReference type="InterPro" id="IPR020579">
    <property type="entry name" value="Exonuc_VII_lsu_C"/>
</dbReference>
<dbReference type="InterPro" id="IPR025824">
    <property type="entry name" value="OB-fold_nuc-bd_dom"/>
</dbReference>
<dbReference type="NCBIfam" id="TIGR00237">
    <property type="entry name" value="xseA"/>
    <property type="match status" value="1"/>
</dbReference>
<dbReference type="PANTHER" id="PTHR30008">
    <property type="entry name" value="EXODEOXYRIBONUCLEASE 7 LARGE SUBUNIT"/>
    <property type="match status" value="1"/>
</dbReference>
<dbReference type="PANTHER" id="PTHR30008:SF0">
    <property type="entry name" value="EXODEOXYRIBONUCLEASE 7 LARGE SUBUNIT"/>
    <property type="match status" value="1"/>
</dbReference>
<dbReference type="Pfam" id="PF02601">
    <property type="entry name" value="Exonuc_VII_L"/>
    <property type="match status" value="2"/>
</dbReference>
<dbReference type="Pfam" id="PF13742">
    <property type="entry name" value="tRNA_anti_2"/>
    <property type="match status" value="1"/>
</dbReference>
<protein>
    <recommendedName>
        <fullName evidence="1">Exodeoxyribonuclease 7 large subunit</fullName>
        <ecNumber evidence="1">3.1.11.6</ecNumber>
    </recommendedName>
    <alternativeName>
        <fullName evidence="1">Exodeoxyribonuclease VII large subunit</fullName>
        <shortName evidence="1">Exonuclease VII large subunit</shortName>
    </alternativeName>
</protein>
<accession>A1UKL7</accession>
<feature type="chain" id="PRO_0000303802" description="Exodeoxyribonuclease 7 large subunit">
    <location>
        <begin position="1"/>
        <end position="411"/>
    </location>
</feature>
<comment type="function">
    <text evidence="1">Bidirectionally degrades single-stranded DNA into large acid-insoluble oligonucleotides, which are then degraded further into small acid-soluble oligonucleotides.</text>
</comment>
<comment type="catalytic activity">
    <reaction evidence="1">
        <text>Exonucleolytic cleavage in either 5'- to 3'- or 3'- to 5'-direction to yield nucleoside 5'-phosphates.</text>
        <dbReference type="EC" id="3.1.11.6"/>
    </reaction>
</comment>
<comment type="subunit">
    <text evidence="1">Heterooligomer composed of large and small subunits.</text>
</comment>
<comment type="subcellular location">
    <subcellularLocation>
        <location evidence="1">Cytoplasm</location>
    </subcellularLocation>
</comment>
<comment type="similarity">
    <text evidence="1">Belongs to the XseA family.</text>
</comment>
<keyword id="KW-0963">Cytoplasm</keyword>
<keyword id="KW-0269">Exonuclease</keyword>
<keyword id="KW-0378">Hydrolase</keyword>
<keyword id="KW-0540">Nuclease</keyword>